<feature type="chain" id="PRO_0000302843" description="Homeobox protein DBX1">
    <location>
        <begin position="1"/>
        <end position="343"/>
    </location>
</feature>
<feature type="DNA-binding region" description="Homeobox" evidence="2">
    <location>
        <begin position="181"/>
        <end position="240"/>
    </location>
</feature>
<feature type="region of interest" description="Disordered" evidence="3">
    <location>
        <begin position="56"/>
        <end position="100"/>
    </location>
</feature>
<feature type="region of interest" description="Disordered" evidence="3">
    <location>
        <begin position="240"/>
        <end position="343"/>
    </location>
</feature>
<feature type="compositionally biased region" description="Low complexity" evidence="3">
    <location>
        <begin position="314"/>
        <end position="323"/>
    </location>
</feature>
<feature type="compositionally biased region" description="Acidic residues" evidence="3">
    <location>
        <begin position="326"/>
        <end position="343"/>
    </location>
</feature>
<protein>
    <recommendedName>
        <fullName>Homeobox protein DBX1</fullName>
    </recommendedName>
    <alternativeName>
        <fullName>Developing brain homeobox protein 1</fullName>
    </alternativeName>
</protein>
<name>DBX1_HUMAN</name>
<reference key="1">
    <citation type="journal article" date="2006" name="Nature">
        <title>Human chromosome 11 DNA sequence and analysis including novel gene identification.</title>
        <authorList>
            <person name="Taylor T.D."/>
            <person name="Noguchi H."/>
            <person name="Totoki Y."/>
            <person name="Toyoda A."/>
            <person name="Kuroki Y."/>
            <person name="Dewar K."/>
            <person name="Lloyd C."/>
            <person name="Itoh T."/>
            <person name="Takeda T."/>
            <person name="Kim D.-W."/>
            <person name="She X."/>
            <person name="Barlow K.F."/>
            <person name="Bloom T."/>
            <person name="Bruford E."/>
            <person name="Chang J.L."/>
            <person name="Cuomo C.A."/>
            <person name="Eichler E."/>
            <person name="FitzGerald M.G."/>
            <person name="Jaffe D.B."/>
            <person name="LaButti K."/>
            <person name="Nicol R."/>
            <person name="Park H.-S."/>
            <person name="Seaman C."/>
            <person name="Sougnez C."/>
            <person name="Yang X."/>
            <person name="Zimmer A.R."/>
            <person name="Zody M.C."/>
            <person name="Birren B.W."/>
            <person name="Nusbaum C."/>
            <person name="Fujiyama A."/>
            <person name="Hattori M."/>
            <person name="Rogers J."/>
            <person name="Lander E.S."/>
            <person name="Sakaki Y."/>
        </authorList>
    </citation>
    <scope>NUCLEOTIDE SEQUENCE [LARGE SCALE GENOMIC DNA]</scope>
</reference>
<comment type="function">
    <text evidence="1">Could have a role in patterning the central nervous system during embryogenesis. Has a key role in regulating the distinct phenotypic features that distinguish two major classes of ventral interneurons, V0 and V1 neurons. Regulates the transcription factor profile, neurotransmitter phenotype, intraspinal migratory path and axonal trajectory of V0 neurons, features that differentiate them from an adjacent set of V1 neurons (By similarity).</text>
</comment>
<comment type="subcellular location">
    <subcellularLocation>
        <location evidence="2">Nucleus</location>
    </subcellularLocation>
</comment>
<comment type="similarity">
    <text evidence="4">Belongs to the H2.0 homeobox family.</text>
</comment>
<dbReference type="EMBL" id="AC068860">
    <property type="status" value="NOT_ANNOTATED_CDS"/>
    <property type="molecule type" value="Genomic_DNA"/>
</dbReference>
<dbReference type="CCDS" id="CCDS31443.2"/>
<dbReference type="RefSeq" id="NP_001025036.2">
    <property type="nucleotide sequence ID" value="NM_001029865.4"/>
</dbReference>
<dbReference type="SMR" id="A6NMT0"/>
<dbReference type="BioGRID" id="125677">
    <property type="interactions" value="10"/>
</dbReference>
<dbReference type="FunCoup" id="A6NMT0">
    <property type="interactions" value="316"/>
</dbReference>
<dbReference type="STRING" id="9606.ENSP00000436881"/>
<dbReference type="iPTMnet" id="A6NMT0"/>
<dbReference type="PhosphoSitePlus" id="A6NMT0"/>
<dbReference type="BioMuta" id="DBX1"/>
<dbReference type="MassIVE" id="A6NMT0"/>
<dbReference type="PaxDb" id="9606-ENSP00000436881"/>
<dbReference type="PeptideAtlas" id="A6NMT0"/>
<dbReference type="Antibodypedia" id="42553">
    <property type="antibodies" value="106 antibodies from 23 providers"/>
</dbReference>
<dbReference type="DNASU" id="120237"/>
<dbReference type="Ensembl" id="ENST00000524983.3">
    <property type="protein sequence ID" value="ENSP00000436881.2"/>
    <property type="gene ID" value="ENSG00000109851.7"/>
</dbReference>
<dbReference type="GeneID" id="120237"/>
<dbReference type="KEGG" id="hsa:120237"/>
<dbReference type="MANE-Select" id="ENST00000524983.3">
    <property type="protein sequence ID" value="ENSP00000436881.2"/>
    <property type="RefSeq nucleotide sequence ID" value="NM_001029865.4"/>
    <property type="RefSeq protein sequence ID" value="NP_001025036.2"/>
</dbReference>
<dbReference type="UCSC" id="uc021qey.2">
    <property type="organism name" value="human"/>
</dbReference>
<dbReference type="AGR" id="HGNC:33185"/>
<dbReference type="CTD" id="120237"/>
<dbReference type="DisGeNET" id="120237"/>
<dbReference type="GeneCards" id="DBX1"/>
<dbReference type="HGNC" id="HGNC:33185">
    <property type="gene designation" value="DBX1"/>
</dbReference>
<dbReference type="HPA" id="ENSG00000109851">
    <property type="expression patterns" value="Not detected"/>
</dbReference>
<dbReference type="MIM" id="619830">
    <property type="type" value="gene"/>
</dbReference>
<dbReference type="neXtProt" id="NX_A6NMT0"/>
<dbReference type="OpenTargets" id="ENSG00000109851"/>
<dbReference type="VEuPathDB" id="HostDB:ENSG00000109851"/>
<dbReference type="eggNOG" id="KOG0488">
    <property type="taxonomic scope" value="Eukaryota"/>
</dbReference>
<dbReference type="GeneTree" id="ENSGT00950000183093"/>
<dbReference type="HOGENOM" id="CLU_053401_0_0_1"/>
<dbReference type="InParanoid" id="A6NMT0"/>
<dbReference type="OMA" id="RHSLAYH"/>
<dbReference type="OrthoDB" id="10048112at2759"/>
<dbReference type="PAN-GO" id="A6NMT0">
    <property type="GO annotations" value="2 GO annotations based on evolutionary models"/>
</dbReference>
<dbReference type="PhylomeDB" id="A6NMT0"/>
<dbReference type="PathwayCommons" id="A6NMT0"/>
<dbReference type="SignaLink" id="A6NMT0"/>
<dbReference type="BioGRID-ORCS" id="120237">
    <property type="hits" value="7 hits in 332 CRISPR screens"/>
</dbReference>
<dbReference type="GeneWiki" id="DBX1"/>
<dbReference type="GenomeRNAi" id="120237"/>
<dbReference type="Pharos" id="A6NMT0">
    <property type="development level" value="Tbio"/>
</dbReference>
<dbReference type="PRO" id="PR:A6NMT0"/>
<dbReference type="Proteomes" id="UP000005640">
    <property type="component" value="Chromosome 11"/>
</dbReference>
<dbReference type="RNAct" id="A6NMT0">
    <property type="molecule type" value="protein"/>
</dbReference>
<dbReference type="Bgee" id="ENSG00000109851">
    <property type="expression patterns" value="Expressed in primordial germ cell in gonad and 3 other cell types or tissues"/>
</dbReference>
<dbReference type="GO" id="GO:0000785">
    <property type="term" value="C:chromatin"/>
    <property type="evidence" value="ECO:0000247"/>
    <property type="project" value="NTNU_SB"/>
</dbReference>
<dbReference type="GO" id="GO:0005634">
    <property type="term" value="C:nucleus"/>
    <property type="evidence" value="ECO:0007669"/>
    <property type="project" value="UniProtKB-SubCell"/>
</dbReference>
<dbReference type="GO" id="GO:0003677">
    <property type="term" value="F:DNA binding"/>
    <property type="evidence" value="ECO:0007669"/>
    <property type="project" value="UniProtKB-KW"/>
</dbReference>
<dbReference type="GO" id="GO:0000981">
    <property type="term" value="F:DNA-binding transcription factor activity, RNA polymerase II-specific"/>
    <property type="evidence" value="ECO:0000247"/>
    <property type="project" value="NTNU_SB"/>
</dbReference>
<dbReference type="GO" id="GO:0021515">
    <property type="term" value="P:cell differentiation in spinal cord"/>
    <property type="evidence" value="ECO:0000318"/>
    <property type="project" value="GO_Central"/>
</dbReference>
<dbReference type="GO" id="GO:0006357">
    <property type="term" value="P:regulation of transcription by RNA polymerase II"/>
    <property type="evidence" value="ECO:0000318"/>
    <property type="project" value="GO_Central"/>
</dbReference>
<dbReference type="GO" id="GO:0021521">
    <property type="term" value="P:ventral spinal cord interneuron specification"/>
    <property type="evidence" value="ECO:0007669"/>
    <property type="project" value="Ensembl"/>
</dbReference>
<dbReference type="CDD" id="cd00086">
    <property type="entry name" value="homeodomain"/>
    <property type="match status" value="1"/>
</dbReference>
<dbReference type="FunFam" id="1.10.10.60:FF:000177">
    <property type="entry name" value="Homeobox protein DBX1"/>
    <property type="match status" value="1"/>
</dbReference>
<dbReference type="Gene3D" id="1.10.10.60">
    <property type="entry name" value="Homeodomain-like"/>
    <property type="match status" value="1"/>
</dbReference>
<dbReference type="InterPro" id="IPR051662">
    <property type="entry name" value="H2.0_Homeobox_NeuralPatt"/>
</dbReference>
<dbReference type="InterPro" id="IPR001356">
    <property type="entry name" value="HD"/>
</dbReference>
<dbReference type="InterPro" id="IPR020479">
    <property type="entry name" value="HD_metazoa"/>
</dbReference>
<dbReference type="InterPro" id="IPR017970">
    <property type="entry name" value="Homeobox_CS"/>
</dbReference>
<dbReference type="InterPro" id="IPR009057">
    <property type="entry name" value="Homeodomain-like_sf"/>
</dbReference>
<dbReference type="InterPro" id="IPR000047">
    <property type="entry name" value="HTH_motif"/>
</dbReference>
<dbReference type="PANTHER" id="PTHR24331">
    <property type="entry name" value="DBX"/>
    <property type="match status" value="1"/>
</dbReference>
<dbReference type="PANTHER" id="PTHR24331:SF6">
    <property type="entry name" value="HOMEOBOX PROTEIN DBX1"/>
    <property type="match status" value="1"/>
</dbReference>
<dbReference type="Pfam" id="PF00046">
    <property type="entry name" value="Homeodomain"/>
    <property type="match status" value="1"/>
</dbReference>
<dbReference type="PRINTS" id="PR00024">
    <property type="entry name" value="HOMEOBOX"/>
</dbReference>
<dbReference type="PRINTS" id="PR00031">
    <property type="entry name" value="HTHREPRESSR"/>
</dbReference>
<dbReference type="SMART" id="SM00389">
    <property type="entry name" value="HOX"/>
    <property type="match status" value="1"/>
</dbReference>
<dbReference type="SUPFAM" id="SSF46689">
    <property type="entry name" value="Homeodomain-like"/>
    <property type="match status" value="1"/>
</dbReference>
<dbReference type="PROSITE" id="PS00027">
    <property type="entry name" value="HOMEOBOX_1"/>
    <property type="match status" value="1"/>
</dbReference>
<dbReference type="PROSITE" id="PS50071">
    <property type="entry name" value="HOMEOBOX_2"/>
    <property type="match status" value="1"/>
</dbReference>
<proteinExistence type="evidence at protein level"/>
<gene>
    <name type="primary">DBX1</name>
</gene>
<keyword id="KW-0217">Developmental protein</keyword>
<keyword id="KW-0238">DNA-binding</keyword>
<keyword id="KW-0371">Homeobox</keyword>
<keyword id="KW-0539">Nucleus</keyword>
<keyword id="KW-1267">Proteomics identification</keyword>
<keyword id="KW-1185">Reference proteome</keyword>
<organism>
    <name type="scientific">Homo sapiens</name>
    <name type="common">Human</name>
    <dbReference type="NCBI Taxonomy" id="9606"/>
    <lineage>
        <taxon>Eukaryota</taxon>
        <taxon>Metazoa</taxon>
        <taxon>Chordata</taxon>
        <taxon>Craniata</taxon>
        <taxon>Vertebrata</taxon>
        <taxon>Euteleostomi</taxon>
        <taxon>Mammalia</taxon>
        <taxon>Eutheria</taxon>
        <taxon>Euarchontoglires</taxon>
        <taxon>Primates</taxon>
        <taxon>Haplorrhini</taxon>
        <taxon>Catarrhini</taxon>
        <taxon>Hominidae</taxon>
        <taxon>Homo</taxon>
    </lineage>
</organism>
<evidence type="ECO:0000250" key="1"/>
<evidence type="ECO:0000255" key="2">
    <source>
        <dbReference type="PROSITE-ProRule" id="PRU00108"/>
    </source>
</evidence>
<evidence type="ECO:0000256" key="3">
    <source>
        <dbReference type="SAM" id="MobiDB-lite"/>
    </source>
</evidence>
<evidence type="ECO:0000305" key="4"/>
<sequence>MMFPGLLAPPAGYPSLLRPTPTLTLPQSLQSAFSGHSSFLVEDLIRISRPPAYLPRSVPTASMSPPRQGAPTALTDTGASDLGSPGPGSRRGGSPPTAFSPASETTFLKFGVNAILSSGPRTETSPALLQSVPPKTFAFPYFEGSFQPFIRSSYFPASSSVVPIPGTFSWPLAARGKPRRGMLRRAVFSDVQRKALEKMFQKQKYISKPDRKKLAAKLGLKDSQVKIWFQNRRMKWRNSKERELLSSGGCREQTLPTKLNPHPDLSDVGQKGPGNEEEEEGPGSPSHRLAYHASSDPQHLRDPRLPGPLPPSPAHSSSPGKPSDFSDSEEEEEGEEQEEITVS</sequence>
<accession>A6NMT0</accession>